<dbReference type="EMBL" id="BT020942">
    <property type="protein sequence ID" value="AAX08959.1"/>
    <property type="molecule type" value="mRNA"/>
</dbReference>
<dbReference type="EMBL" id="BC133466">
    <property type="protein sequence ID" value="AAI33467.1"/>
    <property type="molecule type" value="mRNA"/>
</dbReference>
<dbReference type="RefSeq" id="NP_001015604.1">
    <property type="nucleotide sequence ID" value="NM_001015604.1"/>
</dbReference>
<dbReference type="RefSeq" id="XP_005228286.1">
    <property type="nucleotide sequence ID" value="XM_005228229.3"/>
</dbReference>
<dbReference type="RefSeq" id="XP_024843716.1">
    <property type="nucleotide sequence ID" value="XM_024987948.2"/>
</dbReference>
<dbReference type="RefSeq" id="XP_024843718.1">
    <property type="nucleotide sequence ID" value="XM_024987950.2"/>
</dbReference>
<dbReference type="RefSeq" id="XP_024843719.1">
    <property type="nucleotide sequence ID" value="XM_024987951.2"/>
</dbReference>
<dbReference type="SMR" id="Q5E9H8"/>
<dbReference type="FunCoup" id="Q5E9H8">
    <property type="interactions" value="1703"/>
</dbReference>
<dbReference type="STRING" id="9913.ENSBTAP00000023635"/>
<dbReference type="GlyCosmos" id="Q5E9H8">
    <property type="glycosylation" value="2 sites, No reported glycans"/>
</dbReference>
<dbReference type="GlyGen" id="Q5E9H8">
    <property type="glycosylation" value="2 sites"/>
</dbReference>
<dbReference type="PaxDb" id="9913-ENSBTAP00000023635"/>
<dbReference type="Ensembl" id="ENSBTAT00000023635.5">
    <property type="protein sequence ID" value="ENSBTAP00000023635.3"/>
    <property type="gene ID" value="ENSBTAG00000017767.5"/>
</dbReference>
<dbReference type="Ensembl" id="ENSBTAT00000105109.1">
    <property type="protein sequence ID" value="ENSBTAP00000095221.1"/>
    <property type="gene ID" value="ENSBTAG00000017767.5"/>
</dbReference>
<dbReference type="Ensembl" id="ENSBTAT00000116292.1">
    <property type="protein sequence ID" value="ENSBTAP00000075963.1"/>
    <property type="gene ID" value="ENSBTAG00000017767.5"/>
</dbReference>
<dbReference type="Ensembl" id="ENSBTAT00000120605.1">
    <property type="protein sequence ID" value="ENSBTAP00000100308.1"/>
    <property type="gene ID" value="ENSBTAG00000017767.5"/>
</dbReference>
<dbReference type="Ensembl" id="ENSBTAT00000132184.1">
    <property type="protein sequence ID" value="ENSBTAP00000091105.1"/>
    <property type="gene ID" value="ENSBTAG00000017767.5"/>
</dbReference>
<dbReference type="Ensembl" id="ENSBTAT00000132244.1">
    <property type="protein sequence ID" value="ENSBTAP00000103081.1"/>
    <property type="gene ID" value="ENSBTAG00000017767.5"/>
</dbReference>
<dbReference type="GeneID" id="515148"/>
<dbReference type="KEGG" id="bta:515148"/>
<dbReference type="CTD" id="54328"/>
<dbReference type="VEuPathDB" id="HostDB:ENSBTAG00000017767"/>
<dbReference type="VGNC" id="VGNC:29570">
    <property type="gene designation" value="GPR173"/>
</dbReference>
<dbReference type="eggNOG" id="KOG3656">
    <property type="taxonomic scope" value="Eukaryota"/>
</dbReference>
<dbReference type="GeneTree" id="ENSGT00890000139436"/>
<dbReference type="HOGENOM" id="CLU_055518_0_0_1"/>
<dbReference type="InParanoid" id="Q5E9H8"/>
<dbReference type="OMA" id="KCLRTHT"/>
<dbReference type="OrthoDB" id="6129346at2759"/>
<dbReference type="TreeFam" id="TF331163"/>
<dbReference type="Proteomes" id="UP000009136">
    <property type="component" value="Chromosome X"/>
</dbReference>
<dbReference type="Bgee" id="ENSBTAG00000017767">
    <property type="expression patterns" value="Expressed in pigment epithelium of eye and 92 other cell types or tissues"/>
</dbReference>
<dbReference type="GO" id="GO:0005886">
    <property type="term" value="C:plasma membrane"/>
    <property type="evidence" value="ECO:0000318"/>
    <property type="project" value="GO_Central"/>
</dbReference>
<dbReference type="GO" id="GO:0004968">
    <property type="term" value="F:gonadotropin-releasing hormone receptor activity"/>
    <property type="evidence" value="ECO:0000318"/>
    <property type="project" value="GO_Central"/>
</dbReference>
<dbReference type="GO" id="GO:2001223">
    <property type="term" value="P:negative regulation of neuron migration"/>
    <property type="evidence" value="ECO:0007669"/>
    <property type="project" value="Ensembl"/>
</dbReference>
<dbReference type="CDD" id="cd15217">
    <property type="entry name" value="7tmA_SREB3_GPR173"/>
    <property type="match status" value="1"/>
</dbReference>
<dbReference type="FunFam" id="1.20.1070.10:FF:000074">
    <property type="entry name" value="probable G-protein coupled receptor 173"/>
    <property type="match status" value="1"/>
</dbReference>
<dbReference type="Gene3D" id="1.20.1070.10">
    <property type="entry name" value="Rhodopsin 7-helix transmembrane proteins"/>
    <property type="match status" value="1"/>
</dbReference>
<dbReference type="InterPro" id="IPR051509">
    <property type="entry name" value="GPCR_Orphan/Phoenixin"/>
</dbReference>
<dbReference type="InterPro" id="IPR000276">
    <property type="entry name" value="GPCR_Rhodpsn"/>
</dbReference>
<dbReference type="InterPro" id="IPR017452">
    <property type="entry name" value="GPCR_Rhodpsn_7TM"/>
</dbReference>
<dbReference type="PANTHER" id="PTHR19268">
    <property type="entry name" value="G PROTEIN-COUPLED RECEPTOR"/>
    <property type="match status" value="1"/>
</dbReference>
<dbReference type="PANTHER" id="PTHR19268:SF4">
    <property type="entry name" value="G-PROTEIN COUPLED RECEPTOR 173-RELATED"/>
    <property type="match status" value="1"/>
</dbReference>
<dbReference type="Pfam" id="PF00001">
    <property type="entry name" value="7tm_1"/>
    <property type="match status" value="1"/>
</dbReference>
<dbReference type="PRINTS" id="PR00237">
    <property type="entry name" value="GPCRRHODOPSN"/>
</dbReference>
<dbReference type="SUPFAM" id="SSF81321">
    <property type="entry name" value="Family A G protein-coupled receptor-like"/>
    <property type="match status" value="1"/>
</dbReference>
<dbReference type="PROSITE" id="PS50262">
    <property type="entry name" value="G_PROTEIN_RECEP_F1_2"/>
    <property type="match status" value="1"/>
</dbReference>
<feature type="chain" id="PRO_0000289297" description="Probable G-protein coupled receptor 173">
    <location>
        <begin position="1"/>
        <end position="373"/>
    </location>
</feature>
<feature type="topological domain" description="Extracellular" evidence="3">
    <location>
        <begin position="1"/>
        <end position="26"/>
    </location>
</feature>
<feature type="transmembrane region" description="Helical; Name=1" evidence="3">
    <location>
        <begin position="27"/>
        <end position="47"/>
    </location>
</feature>
<feature type="topological domain" description="Cytoplasmic" evidence="3">
    <location>
        <begin position="48"/>
        <end position="59"/>
    </location>
</feature>
<feature type="transmembrane region" description="Helical; Name=2" evidence="3">
    <location>
        <begin position="60"/>
        <end position="80"/>
    </location>
</feature>
<feature type="topological domain" description="Extracellular" evidence="3">
    <location>
        <begin position="81"/>
        <end position="97"/>
    </location>
</feature>
<feature type="transmembrane region" description="Helical; Name=3" evidence="3">
    <location>
        <begin position="98"/>
        <end position="118"/>
    </location>
</feature>
<feature type="topological domain" description="Cytoplasmic" evidence="3">
    <location>
        <begin position="119"/>
        <end position="139"/>
    </location>
</feature>
<feature type="transmembrane region" description="Helical; Name=4" evidence="3">
    <location>
        <begin position="140"/>
        <end position="160"/>
    </location>
</feature>
<feature type="topological domain" description="Extracellular" evidence="3">
    <location>
        <begin position="161"/>
        <end position="188"/>
    </location>
</feature>
<feature type="transmembrane region" description="Helical; Name=5" evidence="3">
    <location>
        <begin position="189"/>
        <end position="209"/>
    </location>
</feature>
<feature type="topological domain" description="Cytoplasmic" evidence="3">
    <location>
        <begin position="210"/>
        <end position="287"/>
    </location>
</feature>
<feature type="transmembrane region" description="Helical; Name=6" evidence="3">
    <location>
        <begin position="288"/>
        <end position="308"/>
    </location>
</feature>
<feature type="topological domain" description="Extracellular" evidence="3">
    <location>
        <begin position="309"/>
        <end position="322"/>
    </location>
</feature>
<feature type="transmembrane region" description="Helical; Name=7" evidence="3">
    <location>
        <begin position="323"/>
        <end position="343"/>
    </location>
</feature>
<feature type="topological domain" description="Cytoplasmic" evidence="3">
    <location>
        <begin position="344"/>
        <end position="373"/>
    </location>
</feature>
<feature type="glycosylation site" description="N-linked (GlcNAc...) asparagine" evidence="3">
    <location>
        <position position="3"/>
    </location>
</feature>
<feature type="glycosylation site" description="N-linked (GlcNAc...) asparagine" evidence="3">
    <location>
        <position position="184"/>
    </location>
</feature>
<feature type="disulfide bond" evidence="4">
    <location>
        <begin position="96"/>
        <end position="174"/>
    </location>
</feature>
<gene>
    <name type="primary">GPR173</name>
</gene>
<name>GP173_BOVIN</name>
<sequence>MANTTGEPEEVSGALSPPSAVAYVKLVLLGLIMCVSLAGNAILSLLVLKDRALHKAPYYFLLDLCLADGIRSAVCFPFVLASVRHGSSWTFSALSCKIVAFMAVLFCFHAAFMLFCISVTRYMAIAHHRFYAKRMTLWTCAAVICMAWTLSVAMAFPPVFDVGTYKFIREEDQCIFEHRYFKANDTLGFMLMLAVLMAATHAVYGKLLLFEYRHRKMKPVQMVPAISQNWTFHGPGATGQAAANWIAGFGRGPMPPTLLGIRQNGHAASRRLLGMDEVKGEKQLGRMFYAITLLFLLLWSPYIVACYWRVFVKACAVPHRYLATAVWMSFAQAAVNPIVCFLLNKDLKKCLRTHAPCWGTGGAPAPREPYCVM</sequence>
<protein>
    <recommendedName>
        <fullName>Probable G-protein coupled receptor 173</fullName>
    </recommendedName>
</protein>
<keyword id="KW-1003">Cell membrane</keyword>
<keyword id="KW-1015">Disulfide bond</keyword>
<keyword id="KW-0297">G-protein coupled receptor</keyword>
<keyword id="KW-0325">Glycoprotein</keyword>
<keyword id="KW-0472">Membrane</keyword>
<keyword id="KW-0675">Receptor</keyword>
<keyword id="KW-1185">Reference proteome</keyword>
<keyword id="KW-0807">Transducer</keyword>
<keyword id="KW-0812">Transmembrane</keyword>
<keyword id="KW-1133">Transmembrane helix</keyword>
<evidence type="ECO:0000250" key="1">
    <source>
        <dbReference type="UniProtKB" id="Q9JJH2"/>
    </source>
</evidence>
<evidence type="ECO:0000250" key="2">
    <source>
        <dbReference type="UniProtKB" id="Q9NS66"/>
    </source>
</evidence>
<evidence type="ECO:0000255" key="3"/>
<evidence type="ECO:0000255" key="4">
    <source>
        <dbReference type="PROSITE-ProRule" id="PRU00521"/>
    </source>
</evidence>
<evidence type="ECO:0000305" key="5"/>
<reference key="1">
    <citation type="journal article" date="2005" name="BMC Genomics">
        <title>Characterization of 954 bovine full-CDS cDNA sequences.</title>
        <authorList>
            <person name="Harhay G.P."/>
            <person name="Sonstegard T.S."/>
            <person name="Keele J.W."/>
            <person name="Heaton M.P."/>
            <person name="Clawson M.L."/>
            <person name="Snelling W.M."/>
            <person name="Wiedmann R.T."/>
            <person name="Van Tassell C.P."/>
            <person name="Smith T.P.L."/>
        </authorList>
    </citation>
    <scope>NUCLEOTIDE SEQUENCE [LARGE SCALE MRNA]</scope>
</reference>
<reference key="2">
    <citation type="submission" date="2007-02" db="EMBL/GenBank/DDBJ databases">
        <authorList>
            <consortium name="NIH - Mammalian Gene Collection (MGC) project"/>
        </authorList>
    </citation>
    <scope>NUCLEOTIDE SEQUENCE [LARGE SCALE MRNA]</scope>
    <source>
        <strain>Hereford</strain>
        <tissue>Fetal brain</tissue>
    </source>
</reference>
<accession>Q5E9H8</accession>
<comment type="function">
    <text evidence="1 2">Is a receptor for the SMIM20 derived peptides Phoenixin-14 and Phoenixin-20 (By similarity). It mediates the Phoenixin-14 and Phoenixin-20 augmentation of gonadotropin-releasing hormone (GNRH) signaling in the hypothalamus and pituitary gland (By similarity). In the ovary, it mediates the effects of Phoenixin-14 and Phoenixin-20 induced granulosa cell proliferation during follicular growth (By similarity).</text>
</comment>
<comment type="subcellular location">
    <subcellularLocation>
        <location evidence="5">Cell membrane</location>
        <topology evidence="3">Multi-pass membrane protein</topology>
    </subcellularLocation>
</comment>
<comment type="similarity">
    <text evidence="4">Belongs to the G-protein coupled receptor 1 family.</text>
</comment>
<proteinExistence type="evidence at transcript level"/>
<organism>
    <name type="scientific">Bos taurus</name>
    <name type="common">Bovine</name>
    <dbReference type="NCBI Taxonomy" id="9913"/>
    <lineage>
        <taxon>Eukaryota</taxon>
        <taxon>Metazoa</taxon>
        <taxon>Chordata</taxon>
        <taxon>Craniata</taxon>
        <taxon>Vertebrata</taxon>
        <taxon>Euteleostomi</taxon>
        <taxon>Mammalia</taxon>
        <taxon>Eutheria</taxon>
        <taxon>Laurasiatheria</taxon>
        <taxon>Artiodactyla</taxon>
        <taxon>Ruminantia</taxon>
        <taxon>Pecora</taxon>
        <taxon>Bovidae</taxon>
        <taxon>Bovinae</taxon>
        <taxon>Bos</taxon>
    </lineage>
</organism>